<dbReference type="EMBL" id="X81897">
    <property type="protein sequence ID" value="CAA57487.1"/>
    <property type="status" value="ALT_INIT"/>
    <property type="molecule type" value="Genomic_DNA"/>
</dbReference>
<dbReference type="EMBL" id="U97567">
    <property type="protein sequence ID" value="AAB66375.1"/>
    <property type="molecule type" value="Genomic_DNA"/>
</dbReference>
<dbReference type="EMBL" id="AE000511">
    <property type="protein sequence ID" value="AAD08113.1"/>
    <property type="molecule type" value="Genomic_DNA"/>
</dbReference>
<dbReference type="EMBL" id="AF021090">
    <property type="protein sequence ID" value="AAD01682.1"/>
    <property type="molecule type" value="Genomic_DNA"/>
</dbReference>
<dbReference type="PIR" id="C64653">
    <property type="entry name" value="C64653"/>
</dbReference>
<dbReference type="RefSeq" id="NP_207858.1">
    <property type="nucleotide sequence ID" value="NC_000915.1"/>
</dbReference>
<dbReference type="RefSeq" id="WP_000772151.1">
    <property type="nucleotide sequence ID" value="NC_018939.1"/>
</dbReference>
<dbReference type="PDB" id="3GWG">
    <property type="method" value="X-ray"/>
    <property type="resolution" value="1.80 A"/>
    <property type="chains" value="A=1-124"/>
</dbReference>
<dbReference type="PDB" id="3H1E">
    <property type="method" value="X-ray"/>
    <property type="resolution" value="2.40 A"/>
    <property type="chains" value="A=1-124"/>
</dbReference>
<dbReference type="PDB" id="3H1F">
    <property type="method" value="X-ray"/>
    <property type="resolution" value="2.20 A"/>
    <property type="chains" value="A=1-124"/>
</dbReference>
<dbReference type="PDB" id="3H1G">
    <property type="method" value="X-ray"/>
    <property type="resolution" value="1.70 A"/>
    <property type="chains" value="A=1-124"/>
</dbReference>
<dbReference type="PDBsum" id="3GWG"/>
<dbReference type="PDBsum" id="3H1E"/>
<dbReference type="PDBsum" id="3H1F"/>
<dbReference type="PDBsum" id="3H1G"/>
<dbReference type="SMR" id="P71403"/>
<dbReference type="DIP" id="DIP-3256N"/>
<dbReference type="FunCoup" id="P71403">
    <property type="interactions" value="78"/>
</dbReference>
<dbReference type="IntAct" id="P71403">
    <property type="interactions" value="4"/>
</dbReference>
<dbReference type="MINT" id="P71403"/>
<dbReference type="STRING" id="85962.HP_1067"/>
<dbReference type="PaxDb" id="85962-C694_05515"/>
<dbReference type="EnsemblBacteria" id="AAD08113">
    <property type="protein sequence ID" value="AAD08113"/>
    <property type="gene ID" value="HP_1067"/>
</dbReference>
<dbReference type="KEGG" id="heo:C694_05515"/>
<dbReference type="KEGG" id="hpy:HP_1067"/>
<dbReference type="PATRIC" id="fig|85962.47.peg.1146"/>
<dbReference type="eggNOG" id="COG0745">
    <property type="taxonomic scope" value="Bacteria"/>
</dbReference>
<dbReference type="InParanoid" id="P71403"/>
<dbReference type="OrthoDB" id="9786548at2"/>
<dbReference type="PhylomeDB" id="P71403"/>
<dbReference type="EvolutionaryTrace" id="P71403"/>
<dbReference type="Proteomes" id="UP000000429">
    <property type="component" value="Chromosome"/>
</dbReference>
<dbReference type="GO" id="GO:0005737">
    <property type="term" value="C:cytoplasm"/>
    <property type="evidence" value="ECO:0007669"/>
    <property type="project" value="UniProtKB-SubCell"/>
</dbReference>
<dbReference type="GO" id="GO:0046872">
    <property type="term" value="F:metal ion binding"/>
    <property type="evidence" value="ECO:0007669"/>
    <property type="project" value="UniProtKB-KW"/>
</dbReference>
<dbReference type="GO" id="GO:0097588">
    <property type="term" value="P:archaeal or bacterial-type flagellum-dependent cell motility"/>
    <property type="evidence" value="ECO:0007669"/>
    <property type="project" value="UniProtKB-KW"/>
</dbReference>
<dbReference type="GO" id="GO:0006935">
    <property type="term" value="P:chemotaxis"/>
    <property type="evidence" value="ECO:0007669"/>
    <property type="project" value="UniProtKB-KW"/>
</dbReference>
<dbReference type="GO" id="GO:0000160">
    <property type="term" value="P:phosphorelay signal transduction system"/>
    <property type="evidence" value="ECO:0007669"/>
    <property type="project" value="UniProtKB-KW"/>
</dbReference>
<dbReference type="CDD" id="cd19923">
    <property type="entry name" value="REC_CheY_CheY3"/>
    <property type="match status" value="1"/>
</dbReference>
<dbReference type="Gene3D" id="3.40.50.2300">
    <property type="match status" value="1"/>
</dbReference>
<dbReference type="InterPro" id="IPR050595">
    <property type="entry name" value="Bact_response_regulator"/>
</dbReference>
<dbReference type="InterPro" id="IPR011006">
    <property type="entry name" value="CheY-like_superfamily"/>
</dbReference>
<dbReference type="InterPro" id="IPR001789">
    <property type="entry name" value="Sig_transdc_resp-reg_receiver"/>
</dbReference>
<dbReference type="PANTHER" id="PTHR44591:SF3">
    <property type="entry name" value="RESPONSE REGULATORY DOMAIN-CONTAINING PROTEIN"/>
    <property type="match status" value="1"/>
</dbReference>
<dbReference type="PANTHER" id="PTHR44591">
    <property type="entry name" value="STRESS RESPONSE REGULATOR PROTEIN 1"/>
    <property type="match status" value="1"/>
</dbReference>
<dbReference type="Pfam" id="PF00072">
    <property type="entry name" value="Response_reg"/>
    <property type="match status" value="1"/>
</dbReference>
<dbReference type="SMART" id="SM00448">
    <property type="entry name" value="REC"/>
    <property type="match status" value="1"/>
</dbReference>
<dbReference type="SUPFAM" id="SSF52172">
    <property type="entry name" value="CheY-like"/>
    <property type="match status" value="1"/>
</dbReference>
<dbReference type="PROSITE" id="PS50110">
    <property type="entry name" value="RESPONSE_REGULATORY"/>
    <property type="match status" value="1"/>
</dbReference>
<gene>
    <name evidence="8" type="primary">cheY1</name>
    <name type="ordered locus">HP_1067</name>
</gene>
<sequence>MKLLVVDDSSTMRRIIKNTLSRLGYEDVLEAEHGVEAWEKLDANADTKVLITDWNMPEMNGLDLVKKVRSDSRFKEIPIIMITTEGGKAEVITALKAGVNNYIVKPFTPQVLKEKLEVVLGTND</sequence>
<name>CHEY1_HELPY</name>
<protein>
    <recommendedName>
        <fullName evidence="8">Chemotaxis protein CheY1</fullName>
    </recommendedName>
</protein>
<reference key="1">
    <citation type="submission" date="1996-08" db="EMBL/GenBank/DDBJ databases">
        <authorList>
            <person name="Wren B.W."/>
        </authorList>
    </citation>
    <scope>NUCLEOTIDE SEQUENCE [GENOMIC DNA]</scope>
    <source>
        <strain>ATCC 43504 / NCTC 11637 / JCM 7653 / RPH 13487</strain>
    </source>
</reference>
<reference key="2">
    <citation type="journal article" date="1997" name="J. Bacteriol.">
        <title>Identification and characterization of an operon of Helicobacter pylori that is involved in motility and stress adaptation.</title>
        <authorList>
            <person name="Beier D."/>
            <person name="Spohn G."/>
            <person name="Rappuoli R."/>
            <person name="Scarlato V."/>
        </authorList>
    </citation>
    <scope>NUCLEOTIDE SEQUENCE [GENOMIC DNA]</scope>
    <source>
        <strain>DSM 4867 / CCUG 17874 / NCTC 11638</strain>
    </source>
</reference>
<reference key="3">
    <citation type="journal article" date="1997" name="Nature">
        <title>The complete genome sequence of the gastric pathogen Helicobacter pylori.</title>
        <authorList>
            <person name="Tomb J.-F."/>
            <person name="White O."/>
            <person name="Kerlavage A.R."/>
            <person name="Clayton R.A."/>
            <person name="Sutton G.G."/>
            <person name="Fleischmann R.D."/>
            <person name="Ketchum K.A."/>
            <person name="Klenk H.-P."/>
            <person name="Gill S.R."/>
            <person name="Dougherty B.A."/>
            <person name="Nelson K.E."/>
            <person name="Quackenbush J."/>
            <person name="Zhou L."/>
            <person name="Kirkness E.F."/>
            <person name="Peterson S.N."/>
            <person name="Loftus B.J."/>
            <person name="Richardson D.L."/>
            <person name="Dodson R.J."/>
            <person name="Khalak H.G."/>
            <person name="Glodek A."/>
            <person name="McKenney K."/>
            <person name="FitzGerald L.M."/>
            <person name="Lee N."/>
            <person name="Adams M.D."/>
            <person name="Hickey E.K."/>
            <person name="Berg D.E."/>
            <person name="Gocayne J.D."/>
            <person name="Utterback T.R."/>
            <person name="Peterson J.D."/>
            <person name="Kelley J.M."/>
            <person name="Cotton M.D."/>
            <person name="Weidman J.F."/>
            <person name="Fujii C."/>
            <person name="Bowman C."/>
            <person name="Watthey L."/>
            <person name="Wallin E."/>
            <person name="Hayes W.S."/>
            <person name="Borodovsky M."/>
            <person name="Karp P.D."/>
            <person name="Smith H.O."/>
            <person name="Fraser C.M."/>
            <person name="Venter J.C."/>
        </authorList>
    </citation>
    <scope>NUCLEOTIDE SEQUENCE [LARGE SCALE GENOMIC DNA]</scope>
    <source>
        <strain>ATCC 700392 / 26695</strain>
    </source>
</reference>
<reference key="4">
    <citation type="submission" date="1997-08" db="EMBL/GenBank/DDBJ databases">
        <title>Chemotaxis is essential for virulence in Helicobacter pylori: identification of a novel signal transduction protein (CheF) with both CheA and CheY domains.</title>
        <authorList>
            <person name="Jackson C.J."/>
            <person name="Pittman M.S."/>
            <person name="Clayton C.L."/>
            <person name="McColm A.A."/>
            <person name="Bagshaw J.A."/>
            <person name="Kelly D.J."/>
        </authorList>
    </citation>
    <scope>NUCLEOTIDE SEQUENCE [GENOMIC DNA]</scope>
    <source>
        <strain>ATCC 43504 / NCTC 11637 / JCM 7653 / RPH 13487</strain>
    </source>
</reference>
<reference key="5">
    <citation type="journal article" date="2000" name="Infect. Immun.">
        <title>Helicobacter pylori possesses two CheY response regulators and a histidine kinase sensor, CheA, which are essential for chemotaxis and colonization of the gastric mucosa.</title>
        <authorList>
            <person name="Foynes S."/>
            <person name="Dorrell N."/>
            <person name="Ward S.J."/>
            <person name="Stabler R.A."/>
            <person name="McColm A.A."/>
            <person name="Rycroft A.N."/>
            <person name="Wren B.W."/>
        </authorList>
    </citation>
    <scope>FUNCTION</scope>
</reference>
<reference key="6">
    <citation type="journal article" date="2005" name="Microbiology">
        <title>Phosphate flow in the chemotactic response system of Helicobacter pylori.</title>
        <authorList>
            <person name="Jimenez-Pearson M.A."/>
            <person name="Delany I."/>
            <person name="Scarlato V."/>
            <person name="Beier D."/>
        </authorList>
    </citation>
    <scope>PHOSPHORYLATION AT ASP-53</scope>
    <scope>DEPHOSPHORYLATION BY CHEZ</scope>
</reference>
<reference key="7">
    <citation type="journal article" date="2010" name="Mol. Microbiol.">
        <title>A remote CheZ orthologue retains phosphatase function.</title>
        <authorList>
            <person name="Lertsethtakarn P."/>
            <person name="Ottemann K.M."/>
        </authorList>
    </citation>
    <scope>DEPHOSPHORYLATION BY CHEZ</scope>
</reference>
<reference key="8">
    <citation type="journal article" date="2010" name="J. Bacteriol.">
        <title>Crystal structure of activated CheY1 from Helicobacter pylori.</title>
        <authorList>
            <person name="Lam K.H."/>
            <person name="Ling T.K."/>
            <person name="Au S.W."/>
        </authorList>
    </citation>
    <scope>X-RAY CRYSTALLOGRAPHY (1.70 ANGSTROMS) IN COMPLEX WITH MAGNESIUM</scope>
    <scope>FUNCTION</scope>
    <scope>INTERACTION WITH FLIM</scope>
</reference>
<feature type="chain" id="PRO_0000081050" description="Chemotaxis protein CheY1">
    <location>
        <begin position="1"/>
        <end position="124"/>
    </location>
</feature>
<feature type="domain" description="Response regulatory" evidence="3">
    <location>
        <begin position="2"/>
        <end position="120"/>
    </location>
</feature>
<feature type="binding site" evidence="1">
    <location>
        <position position="7"/>
    </location>
    <ligand>
        <name>Mg(2+)</name>
        <dbReference type="ChEBI" id="CHEBI:18420"/>
    </ligand>
</feature>
<feature type="binding site" evidence="10 11 12">
    <location>
        <position position="8"/>
    </location>
    <ligand>
        <name>Mg(2+)</name>
        <dbReference type="ChEBI" id="CHEBI:18420"/>
    </ligand>
</feature>
<feature type="binding site" evidence="10 11 12">
    <location>
        <position position="53"/>
    </location>
    <ligand>
        <name>Mg(2+)</name>
        <dbReference type="ChEBI" id="CHEBI:18420"/>
    </ligand>
</feature>
<feature type="binding site" evidence="10 11 12">
    <location>
        <position position="55"/>
    </location>
    <ligand>
        <name>Mg(2+)</name>
        <dbReference type="ChEBI" id="CHEBI:18420"/>
    </ligand>
</feature>
<feature type="modified residue" description="4-aspartylphosphate" evidence="3 5">
    <location>
        <position position="53"/>
    </location>
</feature>
<feature type="sequence variant" description="In strain: NCTC 11637 and NCTC 11638.">
    <original>T</original>
    <variation>A</variation>
    <location>
        <position position="122"/>
    </location>
</feature>
<feature type="strand" evidence="14">
    <location>
        <begin position="3"/>
        <end position="6"/>
    </location>
</feature>
<feature type="helix" evidence="14">
    <location>
        <begin position="10"/>
        <end position="22"/>
    </location>
</feature>
<feature type="strand" evidence="14">
    <location>
        <begin position="28"/>
        <end position="33"/>
    </location>
</feature>
<feature type="helix" evidence="14">
    <location>
        <begin position="34"/>
        <end position="43"/>
    </location>
</feature>
<feature type="strand" evidence="14">
    <location>
        <begin position="49"/>
        <end position="52"/>
    </location>
</feature>
<feature type="strand" evidence="14">
    <location>
        <begin position="57"/>
        <end position="59"/>
    </location>
</feature>
<feature type="helix" evidence="14">
    <location>
        <begin position="61"/>
        <end position="69"/>
    </location>
</feature>
<feature type="strand" evidence="13">
    <location>
        <begin position="74"/>
        <end position="76"/>
    </location>
</feature>
<feature type="strand" evidence="14">
    <location>
        <begin position="79"/>
        <end position="84"/>
    </location>
</feature>
<feature type="helix" evidence="14">
    <location>
        <begin position="88"/>
        <end position="97"/>
    </location>
</feature>
<feature type="strand" evidence="14">
    <location>
        <begin position="101"/>
        <end position="105"/>
    </location>
</feature>
<feature type="helix" evidence="14">
    <location>
        <begin position="109"/>
        <end position="120"/>
    </location>
</feature>
<accession>P71403</accession>
<accession>O07677</accession>
<proteinExistence type="evidence at protein level"/>
<organism>
    <name type="scientific">Helicobacter pylori (strain ATCC 700392 / 26695)</name>
    <name type="common">Campylobacter pylori</name>
    <dbReference type="NCBI Taxonomy" id="85962"/>
    <lineage>
        <taxon>Bacteria</taxon>
        <taxon>Pseudomonadati</taxon>
        <taxon>Campylobacterota</taxon>
        <taxon>Epsilonproteobacteria</taxon>
        <taxon>Campylobacterales</taxon>
        <taxon>Helicobacteraceae</taxon>
        <taxon>Helicobacter</taxon>
    </lineage>
</organism>
<comment type="function">
    <text evidence="4 6">Chemotactic response regulator protein that modulates the rotation direction of bacterial flagellar motors. Plays an important role in the colonization and infection of Helicobacter pylori (PubMed:10722597). Upon phosphorylation by CheA, interacts with the flagellar motor protein FliM to cause clockwise flagellar rotation and bacterial reversals, as opposed to straight swimming when CheY1 is not phosphorylated (PubMed:20207758).</text>
</comment>
<comment type="cofactor">
    <cofactor evidence="6">
        <name>Mg(2+)</name>
        <dbReference type="ChEBI" id="CHEBI:18420"/>
    </cofactor>
    <text evidence="2">Binds 1 Mg(2+) ion per subunit.</text>
</comment>
<comment type="subunit">
    <text evidence="6">Interacts (when phosphorylated) with FliM.</text>
</comment>
<comment type="interaction">
    <interactant intactId="EBI-6409045">
        <id>P71403</id>
    </interactant>
    <interactant intactId="EBI-6410665">
        <id>O25153</id>
        <label>cheAY</label>
    </interactant>
    <organismsDiffer>false</organismsDiffer>
    <experiments>3</experiments>
</comment>
<comment type="subcellular location">
    <subcellularLocation>
        <location evidence="9">Cytoplasm</location>
    </subcellularLocation>
</comment>
<comment type="PTM">
    <text evidence="5 7">Phosphorylated by CheAY (PubMed:16207913). Dephosphorylated (inactivated) by CheZ (PubMed:16207913, PubMed:20497335).</text>
</comment>
<comment type="sequence caution" evidence="9">
    <conflict type="erroneous initiation">
        <sequence resource="EMBL-CDS" id="CAA57487"/>
    </conflict>
</comment>
<keyword id="KW-0002">3D-structure</keyword>
<keyword id="KW-0145">Chemotaxis</keyword>
<keyword id="KW-0963">Cytoplasm</keyword>
<keyword id="KW-0283">Flagellar rotation</keyword>
<keyword id="KW-0460">Magnesium</keyword>
<keyword id="KW-0479">Metal-binding</keyword>
<keyword id="KW-0597">Phosphoprotein</keyword>
<keyword id="KW-1185">Reference proteome</keyword>
<keyword id="KW-0902">Two-component regulatory system</keyword>
<evidence type="ECO:0000250" key="1">
    <source>
        <dbReference type="UniProtKB" id="A0A0H3AMJ9"/>
    </source>
</evidence>
<evidence type="ECO:0000250" key="2">
    <source>
        <dbReference type="UniProtKB" id="P0AE67"/>
    </source>
</evidence>
<evidence type="ECO:0000255" key="3">
    <source>
        <dbReference type="PROSITE-ProRule" id="PRU00169"/>
    </source>
</evidence>
<evidence type="ECO:0000269" key="4">
    <source>
    </source>
</evidence>
<evidence type="ECO:0000269" key="5">
    <source>
    </source>
</evidence>
<evidence type="ECO:0000269" key="6">
    <source>
    </source>
</evidence>
<evidence type="ECO:0000269" key="7">
    <source>
    </source>
</evidence>
<evidence type="ECO:0000303" key="8">
    <source>
    </source>
</evidence>
<evidence type="ECO:0000305" key="9"/>
<evidence type="ECO:0007744" key="10">
    <source>
        <dbReference type="PDB" id="3GWG"/>
    </source>
</evidence>
<evidence type="ECO:0007744" key="11">
    <source>
        <dbReference type="PDB" id="3H1E"/>
    </source>
</evidence>
<evidence type="ECO:0007744" key="12">
    <source>
        <dbReference type="PDB" id="3H1G"/>
    </source>
</evidence>
<evidence type="ECO:0007829" key="13">
    <source>
        <dbReference type="PDB" id="3H1E"/>
    </source>
</evidence>
<evidence type="ECO:0007829" key="14">
    <source>
        <dbReference type="PDB" id="3H1G"/>
    </source>
</evidence>